<feature type="chain" id="PRO_0000324056" description="Light-independent protochlorophyllide reductase iron-sulfur ATP-binding protein">
    <location>
        <begin position="1"/>
        <end position="306"/>
    </location>
</feature>
<feature type="region of interest" description="Disordered" evidence="2">
    <location>
        <begin position="1"/>
        <end position="31"/>
    </location>
</feature>
<feature type="binding site" evidence="1">
    <location>
        <begin position="50"/>
        <end position="55"/>
    </location>
    <ligand>
        <name>ATP</name>
        <dbReference type="ChEBI" id="CHEBI:30616"/>
    </ligand>
</feature>
<feature type="binding site" evidence="1">
    <location>
        <position position="54"/>
    </location>
    <ligand>
        <name>Mg(2+)</name>
        <dbReference type="ChEBI" id="CHEBI:18420"/>
    </ligand>
</feature>
<feature type="binding site" evidence="1">
    <location>
        <position position="79"/>
    </location>
    <ligand>
        <name>ATP</name>
        <dbReference type="ChEBI" id="CHEBI:30616"/>
    </ligand>
</feature>
<feature type="binding site" evidence="1">
    <location>
        <position position="135"/>
    </location>
    <ligand>
        <name>[4Fe-4S] cluster</name>
        <dbReference type="ChEBI" id="CHEBI:49883"/>
        <note>ligand shared between dimeric partners</note>
    </ligand>
</feature>
<feature type="binding site" evidence="1">
    <location>
        <position position="169"/>
    </location>
    <ligand>
        <name>[4Fe-4S] cluster</name>
        <dbReference type="ChEBI" id="CHEBI:49883"/>
        <note>ligand shared between dimeric partners</note>
    </ligand>
</feature>
<feature type="binding site" evidence="1">
    <location>
        <begin position="220"/>
        <end position="221"/>
    </location>
    <ligand>
        <name>ATP</name>
        <dbReference type="ChEBI" id="CHEBI:30616"/>
    </ligand>
</feature>
<accession>Q28W37</accession>
<reference key="1">
    <citation type="submission" date="2006-02" db="EMBL/GenBank/DDBJ databases">
        <title>Complete sequence of chromosome of Jannaschia sp. CCS1.</title>
        <authorList>
            <consortium name="US DOE Joint Genome Institute"/>
            <person name="Copeland A."/>
            <person name="Lucas S."/>
            <person name="Lapidus A."/>
            <person name="Barry K."/>
            <person name="Detter J.C."/>
            <person name="Glavina del Rio T."/>
            <person name="Hammon N."/>
            <person name="Israni S."/>
            <person name="Pitluck S."/>
            <person name="Brettin T."/>
            <person name="Bruce D."/>
            <person name="Han C."/>
            <person name="Tapia R."/>
            <person name="Gilna P."/>
            <person name="Chertkov O."/>
            <person name="Saunders E."/>
            <person name="Schmutz J."/>
            <person name="Larimer F."/>
            <person name="Land M."/>
            <person name="Kyrpides N."/>
            <person name="Lykidis A."/>
            <person name="Moran M.A."/>
            <person name="Belas R."/>
            <person name="Ye W."/>
            <person name="Buchan A."/>
            <person name="Gonzalez J.M."/>
            <person name="Schell M.A."/>
            <person name="Richardson P."/>
        </authorList>
    </citation>
    <scope>NUCLEOTIDE SEQUENCE [LARGE SCALE GENOMIC DNA]</scope>
    <source>
        <strain>CCS1</strain>
    </source>
</reference>
<organism>
    <name type="scientific">Jannaschia sp. (strain CCS1)</name>
    <dbReference type="NCBI Taxonomy" id="290400"/>
    <lineage>
        <taxon>Bacteria</taxon>
        <taxon>Pseudomonadati</taxon>
        <taxon>Pseudomonadota</taxon>
        <taxon>Alphaproteobacteria</taxon>
        <taxon>Rhodobacterales</taxon>
        <taxon>Roseobacteraceae</taxon>
        <taxon>Jannaschia</taxon>
    </lineage>
</organism>
<name>BCHL_JANSC</name>
<proteinExistence type="inferred from homology"/>
<dbReference type="EC" id="1.3.7.7" evidence="1"/>
<dbReference type="EMBL" id="CP000264">
    <property type="protein sequence ID" value="ABD53075.1"/>
    <property type="status" value="ALT_INIT"/>
    <property type="molecule type" value="Genomic_DNA"/>
</dbReference>
<dbReference type="RefSeq" id="WP_050761447.1">
    <property type="nucleotide sequence ID" value="NC_007802.1"/>
</dbReference>
<dbReference type="SMR" id="Q28W37"/>
<dbReference type="STRING" id="290400.Jann_0158"/>
<dbReference type="KEGG" id="jan:Jann_0158"/>
<dbReference type="eggNOG" id="COG1348">
    <property type="taxonomic scope" value="Bacteria"/>
</dbReference>
<dbReference type="HOGENOM" id="CLU_059373_2_0_5"/>
<dbReference type="OrthoDB" id="9778641at2"/>
<dbReference type="UniPathway" id="UPA00671"/>
<dbReference type="Proteomes" id="UP000008326">
    <property type="component" value="Chromosome"/>
</dbReference>
<dbReference type="GO" id="GO:0051539">
    <property type="term" value="F:4 iron, 4 sulfur cluster binding"/>
    <property type="evidence" value="ECO:0007669"/>
    <property type="project" value="UniProtKB-UniRule"/>
</dbReference>
<dbReference type="GO" id="GO:0005524">
    <property type="term" value="F:ATP binding"/>
    <property type="evidence" value="ECO:0007669"/>
    <property type="project" value="UniProtKB-UniRule"/>
</dbReference>
<dbReference type="GO" id="GO:0046872">
    <property type="term" value="F:metal ion binding"/>
    <property type="evidence" value="ECO:0007669"/>
    <property type="project" value="UniProtKB-KW"/>
</dbReference>
<dbReference type="GO" id="GO:0016730">
    <property type="term" value="F:oxidoreductase activity, acting on iron-sulfur proteins as donors"/>
    <property type="evidence" value="ECO:0007669"/>
    <property type="project" value="InterPro"/>
</dbReference>
<dbReference type="GO" id="GO:0016636">
    <property type="term" value="F:oxidoreductase activity, acting on the CH-CH group of donors, iron-sulfur protein as acceptor"/>
    <property type="evidence" value="ECO:0007669"/>
    <property type="project" value="UniProtKB-UniRule"/>
</dbReference>
<dbReference type="GO" id="GO:0036070">
    <property type="term" value="P:light-independent bacteriochlorophyll biosynthetic process"/>
    <property type="evidence" value="ECO:0007669"/>
    <property type="project" value="UniProtKB-UniRule"/>
</dbReference>
<dbReference type="GO" id="GO:0019685">
    <property type="term" value="P:photosynthesis, dark reaction"/>
    <property type="evidence" value="ECO:0007669"/>
    <property type="project" value="InterPro"/>
</dbReference>
<dbReference type="CDD" id="cd02032">
    <property type="entry name" value="Bchl-like"/>
    <property type="match status" value="1"/>
</dbReference>
<dbReference type="Gene3D" id="3.40.50.300">
    <property type="entry name" value="P-loop containing nucleotide triphosphate hydrolases"/>
    <property type="match status" value="1"/>
</dbReference>
<dbReference type="HAMAP" id="MF_00355">
    <property type="entry name" value="ChlL_BchL"/>
    <property type="match status" value="1"/>
</dbReference>
<dbReference type="InterPro" id="IPR030655">
    <property type="entry name" value="NifH/chlL_CS"/>
</dbReference>
<dbReference type="InterPro" id="IPR000392">
    <property type="entry name" value="NifH/frxC"/>
</dbReference>
<dbReference type="InterPro" id="IPR027417">
    <property type="entry name" value="P-loop_NTPase"/>
</dbReference>
<dbReference type="InterPro" id="IPR005971">
    <property type="entry name" value="Protochlorophyllide_ATP-bd"/>
</dbReference>
<dbReference type="NCBIfam" id="TIGR01281">
    <property type="entry name" value="DPOR_bchL"/>
    <property type="match status" value="1"/>
</dbReference>
<dbReference type="PANTHER" id="PTHR42864">
    <property type="entry name" value="LIGHT-INDEPENDENT PROTOCHLOROPHYLLIDE REDUCTASE IRON-SULFUR ATP-BINDING PROTEIN"/>
    <property type="match status" value="1"/>
</dbReference>
<dbReference type="PANTHER" id="PTHR42864:SF2">
    <property type="entry name" value="LIGHT-INDEPENDENT PROTOCHLOROPHYLLIDE REDUCTASE IRON-SULFUR ATP-BINDING PROTEIN"/>
    <property type="match status" value="1"/>
</dbReference>
<dbReference type="Pfam" id="PF00142">
    <property type="entry name" value="Fer4_NifH"/>
    <property type="match status" value="1"/>
</dbReference>
<dbReference type="PIRSF" id="PIRSF000363">
    <property type="entry name" value="Nitrogenase_iron"/>
    <property type="match status" value="1"/>
</dbReference>
<dbReference type="PRINTS" id="PR00091">
    <property type="entry name" value="NITROGNASEII"/>
</dbReference>
<dbReference type="SUPFAM" id="SSF52540">
    <property type="entry name" value="P-loop containing nucleoside triphosphate hydrolases"/>
    <property type="match status" value="1"/>
</dbReference>
<dbReference type="PROSITE" id="PS00746">
    <property type="entry name" value="NIFH_FRXC_1"/>
    <property type="match status" value="1"/>
</dbReference>
<dbReference type="PROSITE" id="PS00692">
    <property type="entry name" value="NIFH_FRXC_2"/>
    <property type="match status" value="1"/>
</dbReference>
<dbReference type="PROSITE" id="PS51026">
    <property type="entry name" value="NIFH_FRXC_3"/>
    <property type="match status" value="1"/>
</dbReference>
<gene>
    <name evidence="1" type="primary">bchL</name>
    <name type="ordered locus">Jann_0158</name>
</gene>
<keyword id="KW-0004">4Fe-4S</keyword>
<keyword id="KW-0067">ATP-binding</keyword>
<keyword id="KW-0077">Bacteriochlorophyll biosynthesis</keyword>
<keyword id="KW-0149">Chlorophyll biosynthesis</keyword>
<keyword id="KW-0408">Iron</keyword>
<keyword id="KW-0411">Iron-sulfur</keyword>
<keyword id="KW-0460">Magnesium</keyword>
<keyword id="KW-0479">Metal-binding</keyword>
<keyword id="KW-0547">Nucleotide-binding</keyword>
<keyword id="KW-0560">Oxidoreductase</keyword>
<keyword id="KW-0602">Photosynthesis</keyword>
<keyword id="KW-1185">Reference proteome</keyword>
<evidence type="ECO:0000255" key="1">
    <source>
        <dbReference type="HAMAP-Rule" id="MF_00355"/>
    </source>
</evidence>
<evidence type="ECO:0000256" key="2">
    <source>
        <dbReference type="SAM" id="MobiDB-lite"/>
    </source>
</evidence>
<evidence type="ECO:0000305" key="3"/>
<protein>
    <recommendedName>
        <fullName evidence="1">Light-independent protochlorophyllide reductase iron-sulfur ATP-binding protein</fullName>
        <shortName evidence="1">DPOR subunit L</shortName>
        <shortName evidence="1">LI-POR subunit L</shortName>
        <ecNumber evidence="1">1.3.7.7</ecNumber>
    </recommendedName>
</protein>
<comment type="function">
    <text evidence="1">Component of the dark-operative protochlorophyllide reductase (DPOR) that uses Mg-ATP and reduced ferredoxin to reduce ring D of protochlorophyllide (Pchlide) to form chlorophyllide a (Chlide). This reaction is light-independent. The L component serves as a unique electron donor to the NB-component of the complex, and binds Mg-ATP.</text>
</comment>
<comment type="catalytic activity">
    <reaction evidence="1">
        <text>chlorophyllide a + oxidized 2[4Fe-4S]-[ferredoxin] + 2 ADP + 2 phosphate = protochlorophyllide a + reduced 2[4Fe-4S]-[ferredoxin] + 2 ATP + 2 H2O</text>
        <dbReference type="Rhea" id="RHEA:28202"/>
        <dbReference type="Rhea" id="RHEA-COMP:10002"/>
        <dbReference type="Rhea" id="RHEA-COMP:10004"/>
        <dbReference type="ChEBI" id="CHEBI:15377"/>
        <dbReference type="ChEBI" id="CHEBI:30616"/>
        <dbReference type="ChEBI" id="CHEBI:33722"/>
        <dbReference type="ChEBI" id="CHEBI:33723"/>
        <dbReference type="ChEBI" id="CHEBI:43474"/>
        <dbReference type="ChEBI" id="CHEBI:83348"/>
        <dbReference type="ChEBI" id="CHEBI:83350"/>
        <dbReference type="ChEBI" id="CHEBI:456216"/>
        <dbReference type="EC" id="1.3.7.7"/>
    </reaction>
</comment>
<comment type="cofactor">
    <cofactor evidence="1">
        <name>[4Fe-4S] cluster</name>
        <dbReference type="ChEBI" id="CHEBI:49883"/>
    </cofactor>
    <text evidence="1">Binds 1 [4Fe-4S] cluster per dimer.</text>
</comment>
<comment type="pathway">
    <text evidence="1">Porphyrin-containing compound metabolism; bacteriochlorophyll biosynthesis (light-independent).</text>
</comment>
<comment type="subunit">
    <text evidence="1">Homodimer. Protochlorophyllide reductase is composed of three subunits; BchL, BchN and BchB.</text>
</comment>
<comment type="similarity">
    <text evidence="1">Belongs to the NifH/BchL/ChlL family.</text>
</comment>
<comment type="sequence caution" evidence="3">
    <conflict type="erroneous initiation">
        <sequence resource="EMBL-CDS" id="ABD53075"/>
    </conflict>
</comment>
<sequence length="306" mass="33217">MREAAGLEARGLKSPPILKGQDGEGSLQVHQSDDMKIEGAKVFAVYGKGGIGKSTTSSNLSAAFSKLGKKVLQIGCDPKHDSTFTLTGMLQPTVIDILKSVDFHAEELRPEDFVTQGYNGVQCIEAGGPPAGTGCGGYVVGQTVKLLKQHHLLEDTDVVLFDVLGDVVCGGFAAPLQHADRALIVTANDFDSIYAMNRIIAAVQAKSKNYNVRLAGCVANRSKDTDEVDRYCDVVGFKRIGHMPDVDAIRRSRLKKKTLFEMPDEEDIVQCRAEYIRLAEKLYAGTDPLAPAPLEDRDIFELLGFD</sequence>